<gene>
    <name evidence="1" type="primary">rplT</name>
    <name type="ordered locus">MGAS9429_Spy0676</name>
</gene>
<accession>Q1JME8</accession>
<organism>
    <name type="scientific">Streptococcus pyogenes serotype M12 (strain MGAS9429)</name>
    <dbReference type="NCBI Taxonomy" id="370551"/>
    <lineage>
        <taxon>Bacteria</taxon>
        <taxon>Bacillati</taxon>
        <taxon>Bacillota</taxon>
        <taxon>Bacilli</taxon>
        <taxon>Lactobacillales</taxon>
        <taxon>Streptococcaceae</taxon>
        <taxon>Streptococcus</taxon>
    </lineage>
</organism>
<protein>
    <recommendedName>
        <fullName evidence="1">Large ribosomal subunit protein bL20</fullName>
    </recommendedName>
    <alternativeName>
        <fullName evidence="2">50S ribosomal protein L20</fullName>
    </alternativeName>
</protein>
<keyword id="KW-0687">Ribonucleoprotein</keyword>
<keyword id="KW-0689">Ribosomal protein</keyword>
<keyword id="KW-0694">RNA-binding</keyword>
<keyword id="KW-0699">rRNA-binding</keyword>
<feature type="chain" id="PRO_1000049084" description="Large ribosomal subunit protein bL20">
    <location>
        <begin position="1"/>
        <end position="119"/>
    </location>
</feature>
<evidence type="ECO:0000255" key="1">
    <source>
        <dbReference type="HAMAP-Rule" id="MF_00382"/>
    </source>
</evidence>
<evidence type="ECO:0000305" key="2"/>
<proteinExistence type="inferred from homology"/>
<dbReference type="EMBL" id="CP000259">
    <property type="protein sequence ID" value="ABF31864.1"/>
    <property type="molecule type" value="Genomic_DNA"/>
</dbReference>
<dbReference type="RefSeq" id="WP_002985149.1">
    <property type="nucleotide sequence ID" value="NC_008021.1"/>
</dbReference>
<dbReference type="SMR" id="Q1JME8"/>
<dbReference type="GeneID" id="69901075"/>
<dbReference type="KEGG" id="spk:MGAS9429_Spy0676"/>
<dbReference type="HOGENOM" id="CLU_123265_0_1_9"/>
<dbReference type="Proteomes" id="UP000002433">
    <property type="component" value="Chromosome"/>
</dbReference>
<dbReference type="GO" id="GO:1990904">
    <property type="term" value="C:ribonucleoprotein complex"/>
    <property type="evidence" value="ECO:0007669"/>
    <property type="project" value="UniProtKB-KW"/>
</dbReference>
<dbReference type="GO" id="GO:0005840">
    <property type="term" value="C:ribosome"/>
    <property type="evidence" value="ECO:0007669"/>
    <property type="project" value="UniProtKB-KW"/>
</dbReference>
<dbReference type="GO" id="GO:0019843">
    <property type="term" value="F:rRNA binding"/>
    <property type="evidence" value="ECO:0007669"/>
    <property type="project" value="UniProtKB-UniRule"/>
</dbReference>
<dbReference type="GO" id="GO:0003735">
    <property type="term" value="F:structural constituent of ribosome"/>
    <property type="evidence" value="ECO:0007669"/>
    <property type="project" value="InterPro"/>
</dbReference>
<dbReference type="GO" id="GO:0000027">
    <property type="term" value="P:ribosomal large subunit assembly"/>
    <property type="evidence" value="ECO:0007669"/>
    <property type="project" value="UniProtKB-UniRule"/>
</dbReference>
<dbReference type="GO" id="GO:0006412">
    <property type="term" value="P:translation"/>
    <property type="evidence" value="ECO:0007669"/>
    <property type="project" value="InterPro"/>
</dbReference>
<dbReference type="CDD" id="cd07026">
    <property type="entry name" value="Ribosomal_L20"/>
    <property type="match status" value="1"/>
</dbReference>
<dbReference type="FunFam" id="1.10.1900.20:FF:000001">
    <property type="entry name" value="50S ribosomal protein L20"/>
    <property type="match status" value="1"/>
</dbReference>
<dbReference type="Gene3D" id="6.10.160.10">
    <property type="match status" value="1"/>
</dbReference>
<dbReference type="Gene3D" id="1.10.1900.20">
    <property type="entry name" value="Ribosomal protein L20"/>
    <property type="match status" value="1"/>
</dbReference>
<dbReference type="HAMAP" id="MF_00382">
    <property type="entry name" value="Ribosomal_bL20"/>
    <property type="match status" value="1"/>
</dbReference>
<dbReference type="InterPro" id="IPR005813">
    <property type="entry name" value="Ribosomal_bL20"/>
</dbReference>
<dbReference type="InterPro" id="IPR049946">
    <property type="entry name" value="RIBOSOMAL_L20_CS"/>
</dbReference>
<dbReference type="InterPro" id="IPR035566">
    <property type="entry name" value="Ribosomal_protein_bL20_C"/>
</dbReference>
<dbReference type="NCBIfam" id="TIGR01032">
    <property type="entry name" value="rplT_bact"/>
    <property type="match status" value="1"/>
</dbReference>
<dbReference type="PANTHER" id="PTHR10986">
    <property type="entry name" value="39S RIBOSOMAL PROTEIN L20"/>
    <property type="match status" value="1"/>
</dbReference>
<dbReference type="Pfam" id="PF00453">
    <property type="entry name" value="Ribosomal_L20"/>
    <property type="match status" value="1"/>
</dbReference>
<dbReference type="PRINTS" id="PR00062">
    <property type="entry name" value="RIBOSOMALL20"/>
</dbReference>
<dbReference type="SUPFAM" id="SSF74731">
    <property type="entry name" value="Ribosomal protein L20"/>
    <property type="match status" value="1"/>
</dbReference>
<dbReference type="PROSITE" id="PS00937">
    <property type="entry name" value="RIBOSOMAL_L20"/>
    <property type="match status" value="1"/>
</dbReference>
<comment type="function">
    <text evidence="1">Binds directly to 23S ribosomal RNA and is necessary for the in vitro assembly process of the 50S ribosomal subunit. It is not involved in the protein synthesizing functions of that subunit.</text>
</comment>
<comment type="similarity">
    <text evidence="1">Belongs to the bacterial ribosomal protein bL20 family.</text>
</comment>
<sequence>MARVKGGVVSRKRRKRILKLAKGYYGAKHILFRTAKEQVMNSYYYAYRDRRQKKRDFRKLWITRINAAARMNGLSYSQLMHGLKLAEIEVNRKMLADLAVADAAAFTALADAAKAKLGK</sequence>
<name>RL20_STRPC</name>
<reference key="1">
    <citation type="journal article" date="2006" name="Proc. Natl. Acad. Sci. U.S.A.">
        <title>Molecular genetic anatomy of inter- and intraserotype variation in the human bacterial pathogen group A Streptococcus.</title>
        <authorList>
            <person name="Beres S.B."/>
            <person name="Richter E.W."/>
            <person name="Nagiec M.J."/>
            <person name="Sumby P."/>
            <person name="Porcella S.F."/>
            <person name="DeLeo F.R."/>
            <person name="Musser J.M."/>
        </authorList>
    </citation>
    <scope>NUCLEOTIDE SEQUENCE [LARGE SCALE GENOMIC DNA]</scope>
    <source>
        <strain>MGAS9429</strain>
    </source>
</reference>